<keyword id="KW-0002">3D-structure</keyword>
<keyword id="KW-0067">ATP-binding</keyword>
<keyword id="KW-1003">Cell membrane</keyword>
<keyword id="KW-1015">Disulfide bond</keyword>
<keyword id="KW-0418">Kinase</keyword>
<keyword id="KW-0472">Membrane</keyword>
<keyword id="KW-0547">Nucleotide-binding</keyword>
<keyword id="KW-0597">Phosphoprotein</keyword>
<keyword id="KW-1185">Reference proteome</keyword>
<keyword id="KW-0723">Serine/threonine-protein kinase</keyword>
<keyword id="KW-0346">Stress response</keyword>
<keyword id="KW-0808">Transferase</keyword>
<keyword id="KW-0812">Transmembrane</keyword>
<keyword id="KW-1133">Transmembrane helix</keyword>
<feature type="chain" id="PRO_0000171218" description="Serine/threonine-protein kinase PknH">
    <location>
        <begin position="1"/>
        <end position="626"/>
    </location>
</feature>
<feature type="topological domain" description="Cytoplasmic" evidence="1">
    <location>
        <begin position="1"/>
        <end position="403"/>
    </location>
</feature>
<feature type="transmembrane region" description="Helical" evidence="1">
    <location>
        <begin position="404"/>
        <end position="424"/>
    </location>
</feature>
<feature type="topological domain" description="Extracellular" evidence="1">
    <location>
        <begin position="425"/>
        <end position="626"/>
    </location>
</feature>
<feature type="domain" description="Protein kinase" evidence="2">
    <location>
        <begin position="16"/>
        <end position="276"/>
    </location>
</feature>
<feature type="region of interest" description="Disordered" evidence="4">
    <location>
        <begin position="292"/>
        <end position="396"/>
    </location>
</feature>
<feature type="compositionally biased region" description="Pro residues" evidence="4">
    <location>
        <begin position="297"/>
        <end position="308"/>
    </location>
</feature>
<feature type="compositionally biased region" description="Pro residues" evidence="4">
    <location>
        <begin position="316"/>
        <end position="342"/>
    </location>
</feature>
<feature type="compositionally biased region" description="Low complexity" evidence="4">
    <location>
        <begin position="343"/>
        <end position="355"/>
    </location>
</feature>
<feature type="active site" description="Proton acceptor" evidence="2 3">
    <location>
        <position position="139"/>
    </location>
</feature>
<feature type="binding site" evidence="2">
    <location>
        <begin position="22"/>
        <end position="30"/>
    </location>
    <ligand>
        <name>ATP</name>
        <dbReference type="ChEBI" id="CHEBI:30616"/>
    </ligand>
</feature>
<feature type="binding site" evidence="2">
    <location>
        <position position="45"/>
    </location>
    <ligand>
        <name>ATP</name>
        <dbReference type="ChEBI" id="CHEBI:30616"/>
    </ligand>
</feature>
<feature type="modified residue" description="Phosphothreonine" evidence="13">
    <location>
        <position position="170"/>
    </location>
</feature>
<feature type="disulfide bond" evidence="12">
    <location>
        <begin position="482"/>
        <end position="545"/>
    </location>
</feature>
<feature type="disulfide bond" evidence="12">
    <location>
        <begin position="587"/>
        <end position="604"/>
    </location>
</feature>
<feature type="mutagenesis site" description="Abolished kinase activity." evidence="5 6">
    <original>K</original>
    <variation>M</variation>
    <location>
        <position position="45"/>
    </location>
</feature>
<feature type="mutagenesis site" description="Abolished autophosphorylation." evidence="5">
    <original>T</original>
    <variation>A</variation>
    <location>
        <position position="170"/>
    </location>
</feature>
<feature type="helix" evidence="14">
    <location>
        <begin position="439"/>
        <end position="445"/>
    </location>
</feature>
<feature type="helix" evidence="14">
    <location>
        <begin position="449"/>
        <end position="456"/>
    </location>
</feature>
<feature type="strand" evidence="14">
    <location>
        <begin position="476"/>
        <end position="479"/>
    </location>
</feature>
<feature type="helix" evidence="14">
    <location>
        <begin position="480"/>
        <end position="482"/>
    </location>
</feature>
<feature type="helix" evidence="14">
    <location>
        <begin position="483"/>
        <end position="486"/>
    </location>
</feature>
<feature type="strand" evidence="14">
    <location>
        <begin position="488"/>
        <end position="490"/>
    </location>
</feature>
<feature type="helix" evidence="14">
    <location>
        <begin position="491"/>
        <end position="494"/>
    </location>
</feature>
<feature type="strand" evidence="14">
    <location>
        <begin position="501"/>
        <end position="508"/>
    </location>
</feature>
<feature type="strand" evidence="14">
    <location>
        <begin position="515"/>
        <end position="524"/>
    </location>
</feature>
<feature type="helix" evidence="14">
    <location>
        <begin position="528"/>
        <end position="543"/>
    </location>
</feature>
<feature type="turn" evidence="14">
    <location>
        <begin position="544"/>
        <end position="547"/>
    </location>
</feature>
<feature type="strand" evidence="14">
    <location>
        <begin position="549"/>
        <end position="554"/>
    </location>
</feature>
<feature type="strand" evidence="14">
    <location>
        <begin position="557"/>
        <end position="563"/>
    </location>
</feature>
<feature type="strand" evidence="14">
    <location>
        <begin position="573"/>
        <end position="581"/>
    </location>
</feature>
<feature type="strand" evidence="14">
    <location>
        <begin position="586"/>
        <end position="594"/>
    </location>
</feature>
<feature type="strand" evidence="14">
    <location>
        <begin position="597"/>
        <end position="607"/>
    </location>
</feature>
<feature type="helix" evidence="14">
    <location>
        <begin position="611"/>
        <end position="624"/>
    </location>
</feature>
<dbReference type="EC" id="2.7.11.1"/>
<dbReference type="EMBL" id="AL123456">
    <property type="protein sequence ID" value="CCP44022.1"/>
    <property type="molecule type" value="Genomic_DNA"/>
</dbReference>
<dbReference type="PIR" id="B70754">
    <property type="entry name" value="B70754"/>
</dbReference>
<dbReference type="RefSeq" id="NP_215782.1">
    <property type="nucleotide sequence ID" value="NC_000962.3"/>
</dbReference>
<dbReference type="RefSeq" id="WP_010886110.1">
    <property type="nucleotide sequence ID" value="NC_000962.3"/>
</dbReference>
<dbReference type="PDB" id="4ESQ">
    <property type="method" value="X-ray"/>
    <property type="resolution" value="1.70 A"/>
    <property type="chains" value="A=435-626"/>
</dbReference>
<dbReference type="PDBsum" id="4ESQ"/>
<dbReference type="SMR" id="P9WI71"/>
<dbReference type="FunCoup" id="P9WI71">
    <property type="interactions" value="16"/>
</dbReference>
<dbReference type="IntAct" id="P9WI71">
    <property type="interactions" value="2"/>
</dbReference>
<dbReference type="STRING" id="83332.Rv1266c"/>
<dbReference type="iPTMnet" id="P9WI71"/>
<dbReference type="PaxDb" id="83332-Rv1266c"/>
<dbReference type="DNASU" id="887023"/>
<dbReference type="GeneID" id="887023"/>
<dbReference type="KEGG" id="mtu:Rv1266c"/>
<dbReference type="PATRIC" id="fig|83332.12.peg.1418"/>
<dbReference type="TubercuList" id="Rv1266c"/>
<dbReference type="eggNOG" id="COG0515">
    <property type="taxonomic scope" value="Bacteria"/>
</dbReference>
<dbReference type="InParanoid" id="P9WI71"/>
<dbReference type="OrthoDB" id="9762169at2"/>
<dbReference type="BRENDA" id="2.7.11.1">
    <property type="organism ID" value="3445"/>
</dbReference>
<dbReference type="SABIO-RK" id="P9WI71"/>
<dbReference type="EvolutionaryTrace" id="P9WI71"/>
<dbReference type="PHI-base" id="PHI:3624"/>
<dbReference type="Proteomes" id="UP000001584">
    <property type="component" value="Chromosome"/>
</dbReference>
<dbReference type="GO" id="GO:0009274">
    <property type="term" value="C:peptidoglycan-based cell wall"/>
    <property type="evidence" value="ECO:0007005"/>
    <property type="project" value="MTBBASE"/>
</dbReference>
<dbReference type="GO" id="GO:0005886">
    <property type="term" value="C:plasma membrane"/>
    <property type="evidence" value="ECO:0000314"/>
    <property type="project" value="MTBBASE"/>
</dbReference>
<dbReference type="GO" id="GO:0005524">
    <property type="term" value="F:ATP binding"/>
    <property type="evidence" value="ECO:0007669"/>
    <property type="project" value="UniProtKB-KW"/>
</dbReference>
<dbReference type="GO" id="GO:0004672">
    <property type="term" value="F:protein kinase activity"/>
    <property type="evidence" value="ECO:0000314"/>
    <property type="project" value="MTBBASE"/>
</dbReference>
<dbReference type="GO" id="GO:0106310">
    <property type="term" value="F:protein serine kinase activity"/>
    <property type="evidence" value="ECO:0007669"/>
    <property type="project" value="RHEA"/>
</dbReference>
<dbReference type="GO" id="GO:0004674">
    <property type="term" value="F:protein serine/threonine kinase activity"/>
    <property type="evidence" value="ECO:0000314"/>
    <property type="project" value="MTBBASE"/>
</dbReference>
<dbReference type="GO" id="GO:0045926">
    <property type="term" value="P:negative regulation of growth"/>
    <property type="evidence" value="ECO:0000315"/>
    <property type="project" value="MTBBASE"/>
</dbReference>
<dbReference type="GO" id="GO:0045893">
    <property type="term" value="P:positive regulation of DNA-templated transcription"/>
    <property type="evidence" value="ECO:0000315"/>
    <property type="project" value="MTBBASE"/>
</dbReference>
<dbReference type="GO" id="GO:1903338">
    <property type="term" value="P:regulation of cell wall organization or biogenesis"/>
    <property type="evidence" value="ECO:0000314"/>
    <property type="project" value="UniProtKB"/>
</dbReference>
<dbReference type="GO" id="GO:0006355">
    <property type="term" value="P:regulation of DNA-templated transcription"/>
    <property type="evidence" value="ECO:0000314"/>
    <property type="project" value="UniProtKB"/>
</dbReference>
<dbReference type="CDD" id="cd14014">
    <property type="entry name" value="STKc_PknB_like"/>
    <property type="match status" value="1"/>
</dbReference>
<dbReference type="FunFam" id="1.10.510.10:FF:000021">
    <property type="entry name" value="Serine/threonine protein kinase"/>
    <property type="match status" value="1"/>
</dbReference>
<dbReference type="FunFam" id="3.30.200.20:FF:000348">
    <property type="entry name" value="Serine/threonine protein kinase"/>
    <property type="match status" value="1"/>
</dbReference>
<dbReference type="Gene3D" id="3.30.200.20">
    <property type="entry name" value="Phosphorylase Kinase, domain 1"/>
    <property type="match status" value="1"/>
</dbReference>
<dbReference type="Gene3D" id="3.40.1000.70">
    <property type="entry name" value="PknH-like extracellular domain"/>
    <property type="match status" value="1"/>
</dbReference>
<dbReference type="Gene3D" id="1.10.510.10">
    <property type="entry name" value="Transferase(Phosphotransferase) domain 1"/>
    <property type="match status" value="1"/>
</dbReference>
<dbReference type="InterPro" id="IPR011009">
    <property type="entry name" value="Kinase-like_dom_sf"/>
</dbReference>
<dbReference type="InterPro" id="IPR026954">
    <property type="entry name" value="PknH-like_Extracell"/>
</dbReference>
<dbReference type="InterPro" id="IPR038232">
    <property type="entry name" value="PknH-like_Extracell_sf"/>
</dbReference>
<dbReference type="InterPro" id="IPR000719">
    <property type="entry name" value="Prot_kinase_dom"/>
</dbReference>
<dbReference type="InterPro" id="IPR017441">
    <property type="entry name" value="Protein_kinase_ATP_BS"/>
</dbReference>
<dbReference type="InterPro" id="IPR008271">
    <property type="entry name" value="Ser/Thr_kinase_AS"/>
</dbReference>
<dbReference type="PANTHER" id="PTHR43289">
    <property type="entry name" value="MITOGEN-ACTIVATED PROTEIN KINASE KINASE KINASE 20-RELATED"/>
    <property type="match status" value="1"/>
</dbReference>
<dbReference type="PANTHER" id="PTHR43289:SF6">
    <property type="entry name" value="SERINE_THREONINE-PROTEIN KINASE NEKL-3"/>
    <property type="match status" value="1"/>
</dbReference>
<dbReference type="Pfam" id="PF00069">
    <property type="entry name" value="Pkinase"/>
    <property type="match status" value="1"/>
</dbReference>
<dbReference type="Pfam" id="PF14032">
    <property type="entry name" value="PknH_C"/>
    <property type="match status" value="1"/>
</dbReference>
<dbReference type="SMART" id="SM00220">
    <property type="entry name" value="S_TKc"/>
    <property type="match status" value="1"/>
</dbReference>
<dbReference type="SUPFAM" id="SSF56112">
    <property type="entry name" value="Protein kinase-like (PK-like)"/>
    <property type="match status" value="1"/>
</dbReference>
<dbReference type="PROSITE" id="PS00107">
    <property type="entry name" value="PROTEIN_KINASE_ATP"/>
    <property type="match status" value="1"/>
</dbReference>
<dbReference type="PROSITE" id="PS50011">
    <property type="entry name" value="PROTEIN_KINASE_DOM"/>
    <property type="match status" value="1"/>
</dbReference>
<dbReference type="PROSITE" id="PS00108">
    <property type="entry name" value="PROTEIN_KINASE_ST"/>
    <property type="match status" value="1"/>
</dbReference>
<comment type="function">
    <text evidence="5 6 7 8 9 10 11">May regulate bacterial growth in response to external signals to facilitate adaptation to the host environment. In vitro, phosphorylates several substrates such as EmbR, DevR (DosR), DacB1 and Rv0681.</text>
</comment>
<comment type="catalytic activity">
    <reaction evidence="5 6 8 10 11">
        <text>L-seryl-[protein] + ATP = O-phospho-L-seryl-[protein] + ADP + H(+)</text>
        <dbReference type="Rhea" id="RHEA:17989"/>
        <dbReference type="Rhea" id="RHEA-COMP:9863"/>
        <dbReference type="Rhea" id="RHEA-COMP:11604"/>
        <dbReference type="ChEBI" id="CHEBI:15378"/>
        <dbReference type="ChEBI" id="CHEBI:29999"/>
        <dbReference type="ChEBI" id="CHEBI:30616"/>
        <dbReference type="ChEBI" id="CHEBI:83421"/>
        <dbReference type="ChEBI" id="CHEBI:456216"/>
        <dbReference type="EC" id="2.7.11.1"/>
    </reaction>
</comment>
<comment type="catalytic activity">
    <reaction evidence="5 6 8 10 11">
        <text>L-threonyl-[protein] + ATP = O-phospho-L-threonyl-[protein] + ADP + H(+)</text>
        <dbReference type="Rhea" id="RHEA:46608"/>
        <dbReference type="Rhea" id="RHEA-COMP:11060"/>
        <dbReference type="Rhea" id="RHEA-COMP:11605"/>
        <dbReference type="ChEBI" id="CHEBI:15378"/>
        <dbReference type="ChEBI" id="CHEBI:30013"/>
        <dbReference type="ChEBI" id="CHEBI:30616"/>
        <dbReference type="ChEBI" id="CHEBI:61977"/>
        <dbReference type="ChEBI" id="CHEBI:456216"/>
        <dbReference type="EC" id="2.7.11.1"/>
    </reaction>
</comment>
<comment type="cofactor">
    <cofactor evidence="6">
        <name>a divalent metal cation</name>
        <dbReference type="ChEBI" id="CHEBI:60240"/>
    </cofactor>
</comment>
<comment type="activity regulation">
    <text evidence="6">Inhibited by the kinase inhibitors staurosporine and H-7.</text>
</comment>
<comment type="biophysicochemical properties">
    <kinetics>
        <KM evidence="10">0.597 uM for EmbR</KM>
        <KM evidence="10">1.59 uM for DacB1</KM>
        <KM evidence="10">19.82 uM for Rv0681</KM>
    </kinetics>
</comment>
<comment type="subcellular location">
    <subcellularLocation>
        <location evidence="6">Cell membrane</location>
        <topology evidence="6">Single-pass membrane protein</topology>
    </subcellularLocation>
</comment>
<comment type="induction">
    <text evidence="6 8">Repressed by low pH and heat shock. Up-regulated inside the host macrophages.</text>
</comment>
<comment type="PTM">
    <text evidence="5">Autophosphorylated on threonine and serine residues. Dephosphorylated by PstP.</text>
</comment>
<comment type="disruption phenotype">
    <text evidence="7">Deletion causes hypervirulence during the chronic phase of infection in BALB/c mice. Mutant displays increased resistance to acidified nitrite stress. Does not affect sensitivity to ethambutol.</text>
</comment>
<comment type="similarity">
    <text evidence="2">Belongs to the protein kinase superfamily. Ser/Thr protein kinase family.</text>
</comment>
<accession>P9WI71</accession>
<accession>L0T6C9</accession>
<accession>Q11053</accession>
<sequence length="626" mass="66754">MSDAQDSRVGSMFGPYHLKRLLGRGGMGEVYEAEHTVKEWTVAVKLMTAEFSKDPVFRERMKREARIAGRLQEPHVVPIHDYGEVDGQMFLEMRLVEGTDLDSVLKRFGPLTPPRAVAIITQIASALDAAHADGVMHRDVKPQNILITRDDFAYLVDFGIASATTDEKLTQLGTAVGTWKYMAPERFSNDEVTYRADIYALACVLHECLTGAPPYRADSAGTLVSSHLMGPIPQPSAIRPGIPKAFDAVVARGMAKKPEDRYASAGDLALAAHEALSDPDQDHAADILRRSQESTLPAPPKPVPPPTMPATAMAPRQPPAPPVTPPGVQPAPKPSYTPPAQPGPAGQRPGPTGQPSWAPNSGPMPASGPTPTPQYYQGGGWGAPPSGGPSPWAQTPRKTNPWPLVAGAAAVVLVLVLGAIGIWIAIRPKPVQPPQPVAEERLSALLLNSSEVNAVMGSSSMQPGKPITSMDSSPVTVSLPDCQGALYTSQDPVYAGTGYTAINGLISSEPGDNYEHWVNQAVVAFPTADKARAFVQTSADKWKNCAGKTVTVTNKAKTYRWTFADVKGSPPTITVIDTQEGAEGWECQRAMSVANNVVVDVNACGYRITNQAGQIAAKIVDKVNKE</sequence>
<protein>
    <recommendedName>
        <fullName>Serine/threonine-protein kinase PknH</fullName>
        <ecNumber>2.7.11.1</ecNumber>
    </recommendedName>
</protein>
<reference key="1">
    <citation type="journal article" date="1998" name="Nature">
        <title>Deciphering the biology of Mycobacterium tuberculosis from the complete genome sequence.</title>
        <authorList>
            <person name="Cole S.T."/>
            <person name="Brosch R."/>
            <person name="Parkhill J."/>
            <person name="Garnier T."/>
            <person name="Churcher C.M."/>
            <person name="Harris D.E."/>
            <person name="Gordon S.V."/>
            <person name="Eiglmeier K."/>
            <person name="Gas S."/>
            <person name="Barry C.E. III"/>
            <person name="Tekaia F."/>
            <person name="Badcock K."/>
            <person name="Basham D."/>
            <person name="Brown D."/>
            <person name="Chillingworth T."/>
            <person name="Connor R."/>
            <person name="Davies R.M."/>
            <person name="Devlin K."/>
            <person name="Feltwell T."/>
            <person name="Gentles S."/>
            <person name="Hamlin N."/>
            <person name="Holroyd S."/>
            <person name="Hornsby T."/>
            <person name="Jagels K."/>
            <person name="Krogh A."/>
            <person name="McLean J."/>
            <person name="Moule S."/>
            <person name="Murphy L.D."/>
            <person name="Oliver S."/>
            <person name="Osborne J."/>
            <person name="Quail M.A."/>
            <person name="Rajandream M.A."/>
            <person name="Rogers J."/>
            <person name="Rutter S."/>
            <person name="Seeger K."/>
            <person name="Skelton S."/>
            <person name="Squares S."/>
            <person name="Squares R."/>
            <person name="Sulston J.E."/>
            <person name="Taylor K."/>
            <person name="Whitehead S."/>
            <person name="Barrell B.G."/>
        </authorList>
    </citation>
    <scope>NUCLEOTIDE SEQUENCE [LARGE SCALE GENOMIC DNA]</scope>
    <source>
        <strain>ATCC 25618 / H37Rv</strain>
    </source>
</reference>
<reference key="2">
    <citation type="journal article" date="2003" name="Biochemistry">
        <title>An FHA phosphoprotein recognition domain mediates protein EmbR phosphorylation by PknH, a Ser/Thr protein kinase from Mycobacterium tuberculosis.</title>
        <authorList>
            <person name="Molle V."/>
            <person name="Kremer L."/>
            <person name="Girard-Blanc C."/>
            <person name="Besra G.S."/>
            <person name="Cozzone A.J."/>
            <person name="Prost J.F."/>
        </authorList>
    </citation>
    <scope>FUNCTION</scope>
    <scope>CATALYTIC ACTIVITY</scope>
    <scope>PHOSPHORYLATION AT THR-170</scope>
    <scope>MUTAGENESIS OF LYS-45 AND THR-170</scope>
</reference>
<reference key="3">
    <citation type="journal article" date="2004" name="FEMS Microbiol. Lett.">
        <title>PknH, a transmembrane Hank's type serine/threonine kinase from Mycobacterium tuberculosis is differentially expressed under stress conditions.</title>
        <authorList>
            <person name="Sharma K."/>
            <person name="Chandra H."/>
            <person name="Gupta P.K."/>
            <person name="Pathak M."/>
            <person name="Narayan A."/>
            <person name="Meena L.S."/>
            <person name="D'Souza R.C."/>
            <person name="Chopra P."/>
            <person name="Ramachandran S."/>
            <person name="Singh Y."/>
        </authorList>
    </citation>
    <scope>FUNCTION</scope>
    <scope>CATALYTIC ACTIVITY</scope>
    <scope>COFACTOR</scope>
    <scope>ACTIVITY REGULATION</scope>
    <scope>SUBCELLULAR LOCATION</scope>
    <scope>INDUCTION</scope>
    <scope>AUTOPHOSPHORYLATION</scope>
    <scope>MUTAGENESIS OF LYS-45</scope>
</reference>
<reference key="4">
    <citation type="journal article" date="2005" name="J. Bacteriol.">
        <title>Deletion of the Mycobacterium tuberculosis pknH gene confers a higher bacillary load during the chronic phase of infection in BALB/c mice.</title>
        <authorList>
            <person name="Papavinasasundaram K.G."/>
            <person name="Chan B."/>
            <person name="Chung J.H."/>
            <person name="Colston M.J."/>
            <person name="Davis E.O."/>
            <person name="Av-Gay Y."/>
        </authorList>
    </citation>
    <scope>FUNCTION</scope>
    <scope>DISRUPTION PHENOTYPE</scope>
</reference>
<reference key="5">
    <citation type="journal article" date="2006" name="FEBS J.">
        <title>EmbR, a regulatory protein with ATPase activity, is a substrate of multiple serine/threonine kinases and phosphatase in Mycobacterium tuberculosis.</title>
        <authorList>
            <person name="Sharma K."/>
            <person name="Gupta M."/>
            <person name="Krupa A."/>
            <person name="Srinivasan N."/>
            <person name="Singh Y."/>
        </authorList>
    </citation>
    <scope>FUNCTION AS A KINASE WITH EMBR AS SUBSTRATE</scope>
    <scope>DEPHOSPHORYLATION BY PSTP</scope>
</reference>
<reference key="6">
    <citation type="journal article" date="2006" name="J. Bacteriol.">
        <title>Transcriptional control of the mycobacterial embCAB operon by PknH through a regulatory protein, EmbR, in vivo.</title>
        <authorList>
            <person name="Sharma K."/>
            <person name="Gupta M."/>
            <person name="Pathak M."/>
            <person name="Gupta N."/>
            <person name="Koul A."/>
            <person name="Sarangi S."/>
            <person name="Baweja R."/>
            <person name="Singh Y."/>
        </authorList>
    </citation>
    <scope>FUNCTION</scope>
    <scope>CATALYTIC ACTIVITY</scope>
    <scope>INDUCTION</scope>
</reference>
<reference key="7">
    <citation type="journal article" date="2006" name="Proteomics">
        <title>Characterization of the phosphorylation sites of Mycobacterium tuberculosis serine/threonine protein kinases, PknA, PknD, PknE, and PknH by mass spectrometry.</title>
        <authorList>
            <person name="Molle V."/>
            <person name="Zanella-Cleon I."/>
            <person name="Robin J.P."/>
            <person name="Mallejac S."/>
            <person name="Cozzone A.J."/>
            <person name="Becchi M."/>
        </authorList>
    </citation>
    <scope>AUTOPHOSPHORYLATION</scope>
    <scope>IDENTIFICATION BY MASS SPECTROMETRY</scope>
    <source>
        <strain>ATCC 25618 / H37Rv</strain>
    </source>
</reference>
<reference key="8">
    <citation type="journal article" date="2007" name="Biochem. Biophys. Res. Commun.">
        <title>Novel substrates of Mycobacterium tuberculosis PknH Ser/Thr kinase.</title>
        <authorList>
            <person name="Zheng X."/>
            <person name="Papavinasasundaram K.G."/>
            <person name="Av-Gay Y."/>
        </authorList>
    </citation>
    <scope>FUNCTION</scope>
    <scope>CATALYTIC ACTIVITY</scope>
    <scope>BIOPHYSICOCHEMICAL PROPERTIES</scope>
    <source>
        <strain>ATCC 25618 / H37Rv</strain>
    </source>
</reference>
<reference key="9">
    <citation type="journal article" date="2010" name="J. Biol. Chem.">
        <title>Convergence of Ser/Thr and two-component signaling to coordinate expression of the dormancy regulon in Mycobacterium tuberculosis.</title>
        <authorList>
            <person name="Chao J.D."/>
            <person name="Papavinasasundaram K.G."/>
            <person name="Zheng X."/>
            <person name="Chavez-Steenbock A."/>
            <person name="Wang X."/>
            <person name="Lee G.Q."/>
            <person name="Av-Gay Y."/>
        </authorList>
    </citation>
    <scope>FUNCTION</scope>
    <scope>CATALYTIC ACTIVITY</scope>
    <source>
        <strain>ATCC 25618 / H37Rv</strain>
    </source>
</reference>
<reference key="10">
    <citation type="journal article" date="2011" name="Mol. Cell. Proteomics">
        <title>Proteogenomic analysis of Mycobacterium tuberculosis by high resolution mass spectrometry.</title>
        <authorList>
            <person name="Kelkar D.S."/>
            <person name="Kumar D."/>
            <person name="Kumar P."/>
            <person name="Balakrishnan L."/>
            <person name="Muthusamy B."/>
            <person name="Yadav A.K."/>
            <person name="Shrivastava P."/>
            <person name="Marimuthu A."/>
            <person name="Anand S."/>
            <person name="Sundaram H."/>
            <person name="Kingsbury R."/>
            <person name="Harsha H.C."/>
            <person name="Nair B."/>
            <person name="Prasad T.S."/>
            <person name="Chauhan D.S."/>
            <person name="Katoch K."/>
            <person name="Katoch V.M."/>
            <person name="Kumar P."/>
            <person name="Chaerkady R."/>
            <person name="Ramachandran S."/>
            <person name="Dash D."/>
            <person name="Pandey A."/>
        </authorList>
    </citation>
    <scope>IDENTIFICATION BY MASS SPECTROMETRY [LARGE SCALE ANALYSIS]</scope>
    <source>
        <strain>ATCC 25618 / H37Rv</strain>
    </source>
</reference>
<reference key="11">
    <citation type="journal article" date="2012" name="J. Mol. Biol.">
        <title>Structure of the sensor domain of Mycobacterium tuberculosis PknH receptor kinase reveals a conserved binding cleft.</title>
        <authorList>
            <person name="Cavazos A."/>
            <person name="Prigozhin D.M."/>
            <person name="Alber T."/>
        </authorList>
    </citation>
    <scope>X-RAY CRYSTALLOGRAPHY (1.7 ANGSTROMS) OF 435-626</scope>
    <scope>DISULFIDE BONDS</scope>
    <source>
        <strain>ATCC 25618 / H37Rv</strain>
    </source>
</reference>
<proteinExistence type="evidence at protein level"/>
<organism>
    <name type="scientific">Mycobacterium tuberculosis (strain ATCC 25618 / H37Rv)</name>
    <dbReference type="NCBI Taxonomy" id="83332"/>
    <lineage>
        <taxon>Bacteria</taxon>
        <taxon>Bacillati</taxon>
        <taxon>Actinomycetota</taxon>
        <taxon>Actinomycetes</taxon>
        <taxon>Mycobacteriales</taxon>
        <taxon>Mycobacteriaceae</taxon>
        <taxon>Mycobacterium</taxon>
        <taxon>Mycobacterium tuberculosis complex</taxon>
    </lineage>
</organism>
<evidence type="ECO:0000255" key="1"/>
<evidence type="ECO:0000255" key="2">
    <source>
        <dbReference type="PROSITE-ProRule" id="PRU00159"/>
    </source>
</evidence>
<evidence type="ECO:0000255" key="3">
    <source>
        <dbReference type="PROSITE-ProRule" id="PRU10027"/>
    </source>
</evidence>
<evidence type="ECO:0000256" key="4">
    <source>
        <dbReference type="SAM" id="MobiDB-lite"/>
    </source>
</evidence>
<evidence type="ECO:0000269" key="5">
    <source>
    </source>
</evidence>
<evidence type="ECO:0000269" key="6">
    <source>
    </source>
</evidence>
<evidence type="ECO:0000269" key="7">
    <source>
    </source>
</evidence>
<evidence type="ECO:0000269" key="8">
    <source>
    </source>
</evidence>
<evidence type="ECO:0000269" key="9">
    <source>
    </source>
</evidence>
<evidence type="ECO:0000269" key="10">
    <source>
    </source>
</evidence>
<evidence type="ECO:0000269" key="11">
    <source>
    </source>
</evidence>
<evidence type="ECO:0000269" key="12">
    <source>
    </source>
</evidence>
<evidence type="ECO:0000305" key="13">
    <source>
    </source>
</evidence>
<evidence type="ECO:0007829" key="14">
    <source>
        <dbReference type="PDB" id="4ESQ"/>
    </source>
</evidence>
<name>PKNH_MYCTU</name>
<gene>
    <name type="primary">pknH</name>
    <name type="ordered locus">Rv1266c</name>
    <name type="ORF">MTCY50.16</name>
</gene>